<name>RS17_THEAQ</name>
<evidence type="ECO:0000255" key="1">
    <source>
        <dbReference type="HAMAP-Rule" id="MF_01345"/>
    </source>
</evidence>
<evidence type="ECO:0000305" key="2"/>
<accession>A0A0N0BLS5</accession>
<accession>Q5SHP7</accession>
<reference key="1">
    <citation type="journal article" date="1991" name="Eur. J. Biochem.">
        <title>Analysis of the spc ribosomal protein operon of Thermus aquaticus.</title>
        <authorList>
            <person name="Jahn O."/>
            <person name="Hartmann R.K."/>
            <person name="Erdmann V.A."/>
        </authorList>
    </citation>
    <scope>NUCLEOTIDE SEQUENCE [GENOMIC DNA]</scope>
    <source>
        <strain>EP 00276</strain>
    </source>
</reference>
<reference key="2">
    <citation type="submission" date="2015-07" db="EMBL/GenBank/DDBJ databases">
        <authorList>
            <person name="Zylicz-Stachula A."/>
            <person name="Jezewska-Frackowiak J."/>
            <person name="Czajkowska E."/>
            <person name="Skowron P.M."/>
        </authorList>
    </citation>
    <scope>NUCLEOTIDE SEQUENCE [LARGE SCALE GENOMIC DNA]</scope>
    <source>
        <strain>ATCC 25104 / DSM 625 / JCM 10724 / NBRC 103206 / NCIMB 11243 / YT-1</strain>
    </source>
</reference>
<keyword id="KW-0687">Ribonucleoprotein</keyword>
<keyword id="KW-0689">Ribosomal protein</keyword>
<keyword id="KW-0694">RNA-binding</keyword>
<keyword id="KW-0699">rRNA-binding</keyword>
<comment type="function">
    <text evidence="1">One of the primary rRNA binding proteins, it binds specifically to the 5'-end of 16S ribosomal RNA.</text>
</comment>
<comment type="subunit">
    <text evidence="1">Part of the 30S ribosomal subunit.</text>
</comment>
<comment type="similarity">
    <text evidence="1">Belongs to the universal ribosomal protein uS17 family.</text>
</comment>
<dbReference type="EMBL" id="X56552">
    <property type="protein sequence ID" value="CAA39893.1"/>
    <property type="molecule type" value="Genomic_DNA"/>
</dbReference>
<dbReference type="EMBL" id="LHCI01000106">
    <property type="protein sequence ID" value="KOX89846.1"/>
    <property type="molecule type" value="Genomic_DNA"/>
</dbReference>
<dbReference type="RefSeq" id="WP_003043879.1">
    <property type="nucleotide sequence ID" value="NZ_LHCI01000106.1"/>
</dbReference>
<dbReference type="SMR" id="A0A0N0BLS5"/>
<dbReference type="IntAct" id="A0A0N0BLS5">
    <property type="interactions" value="2"/>
</dbReference>
<dbReference type="PATRIC" id="fig|271.14.peg.1105"/>
<dbReference type="Proteomes" id="UP000037685">
    <property type="component" value="Unassembled WGS sequence"/>
</dbReference>
<dbReference type="GO" id="GO:0022627">
    <property type="term" value="C:cytosolic small ribosomal subunit"/>
    <property type="evidence" value="ECO:0007669"/>
    <property type="project" value="TreeGrafter"/>
</dbReference>
<dbReference type="GO" id="GO:0019843">
    <property type="term" value="F:rRNA binding"/>
    <property type="evidence" value="ECO:0007669"/>
    <property type="project" value="UniProtKB-UniRule"/>
</dbReference>
<dbReference type="GO" id="GO:0003735">
    <property type="term" value="F:structural constituent of ribosome"/>
    <property type="evidence" value="ECO:0007669"/>
    <property type="project" value="InterPro"/>
</dbReference>
<dbReference type="GO" id="GO:0006412">
    <property type="term" value="P:translation"/>
    <property type="evidence" value="ECO:0007669"/>
    <property type="project" value="UniProtKB-UniRule"/>
</dbReference>
<dbReference type="CDD" id="cd00364">
    <property type="entry name" value="Ribosomal_uS17"/>
    <property type="match status" value="1"/>
</dbReference>
<dbReference type="Gene3D" id="2.40.50.140">
    <property type="entry name" value="Nucleic acid-binding proteins"/>
    <property type="match status" value="1"/>
</dbReference>
<dbReference type="HAMAP" id="MF_01345_B">
    <property type="entry name" value="Ribosomal_uS17_B"/>
    <property type="match status" value="1"/>
</dbReference>
<dbReference type="InterPro" id="IPR012340">
    <property type="entry name" value="NA-bd_OB-fold"/>
</dbReference>
<dbReference type="InterPro" id="IPR000266">
    <property type="entry name" value="Ribosomal_uS17"/>
</dbReference>
<dbReference type="InterPro" id="IPR019984">
    <property type="entry name" value="Ribosomal_uS17_bact/chlr"/>
</dbReference>
<dbReference type="InterPro" id="IPR019979">
    <property type="entry name" value="Ribosomal_uS17_CS"/>
</dbReference>
<dbReference type="NCBIfam" id="NF004123">
    <property type="entry name" value="PRK05610.1"/>
    <property type="match status" value="1"/>
</dbReference>
<dbReference type="NCBIfam" id="TIGR03635">
    <property type="entry name" value="uS17_bact"/>
    <property type="match status" value="1"/>
</dbReference>
<dbReference type="PANTHER" id="PTHR10744">
    <property type="entry name" value="40S RIBOSOMAL PROTEIN S11 FAMILY MEMBER"/>
    <property type="match status" value="1"/>
</dbReference>
<dbReference type="PANTHER" id="PTHR10744:SF1">
    <property type="entry name" value="SMALL RIBOSOMAL SUBUNIT PROTEIN US17M"/>
    <property type="match status" value="1"/>
</dbReference>
<dbReference type="Pfam" id="PF00366">
    <property type="entry name" value="Ribosomal_S17"/>
    <property type="match status" value="1"/>
</dbReference>
<dbReference type="PRINTS" id="PR00973">
    <property type="entry name" value="RIBOSOMALS17"/>
</dbReference>
<dbReference type="SUPFAM" id="SSF50249">
    <property type="entry name" value="Nucleic acid-binding proteins"/>
    <property type="match status" value="1"/>
</dbReference>
<dbReference type="PROSITE" id="PS00056">
    <property type="entry name" value="RIBOSOMAL_S17"/>
    <property type="match status" value="1"/>
</dbReference>
<proteinExistence type="inferred from homology"/>
<sequence>MPKKVLTGVVVSDKMQKTVTVLVERQFPHPLYGKVIKRSKKYLAHDPEERYKVGDVVEIIEARPISKRKRFRVLRLVEEGRLDLVEKYLVRRQNYASLSKRGGKA</sequence>
<organism>
    <name type="scientific">Thermus aquaticus</name>
    <dbReference type="NCBI Taxonomy" id="271"/>
    <lineage>
        <taxon>Bacteria</taxon>
        <taxon>Thermotogati</taxon>
        <taxon>Deinococcota</taxon>
        <taxon>Deinococci</taxon>
        <taxon>Thermales</taxon>
        <taxon>Thermaceae</taxon>
        <taxon>Thermus</taxon>
    </lineage>
</organism>
<gene>
    <name evidence="1" type="primary">rpsQ</name>
    <name type="ORF">BVI061214_01029</name>
</gene>
<protein>
    <recommendedName>
        <fullName evidence="1">Small ribosomal subunit protein uS17</fullName>
    </recommendedName>
    <alternativeName>
        <fullName evidence="2">30S ribosomal protein S17</fullName>
    </alternativeName>
</protein>
<feature type="chain" id="PRO_0000439212" description="Small ribosomal subunit protein uS17">
    <location>
        <begin position="1"/>
        <end position="105"/>
    </location>
</feature>